<proteinExistence type="evidence at protein level"/>
<evidence type="ECO:0000250" key="1"/>
<evidence type="ECO:0000250" key="2">
    <source>
        <dbReference type="UniProtKB" id="P42209"/>
    </source>
</evidence>
<evidence type="ECO:0000255" key="3">
    <source>
        <dbReference type="PROSITE-ProRule" id="PRU01056"/>
    </source>
</evidence>
<evidence type="ECO:0000256" key="4">
    <source>
        <dbReference type="SAM" id="MobiDB-lite"/>
    </source>
</evidence>
<evidence type="ECO:0000269" key="5">
    <source>
    </source>
</evidence>
<evidence type="ECO:0000269" key="6">
    <source>
    </source>
</evidence>
<evidence type="ECO:0000303" key="7">
    <source>
    </source>
</evidence>
<evidence type="ECO:0000305" key="8"/>
<evidence type="ECO:0000312" key="9">
    <source>
        <dbReference type="HGNC" id="HGNC:2879"/>
    </source>
</evidence>
<evidence type="ECO:0007744" key="10">
    <source>
    </source>
</evidence>
<evidence type="ECO:0007744" key="11">
    <source>
    </source>
</evidence>
<evidence type="ECO:0007829" key="12">
    <source>
        <dbReference type="PDB" id="6WBE"/>
    </source>
</evidence>
<name>SEPT1_HUMAN</name>
<feature type="chain" id="PRO_0000173513" description="Septin-1">
    <location>
        <begin position="1"/>
        <end position="372"/>
    </location>
</feature>
<feature type="domain" description="Septin-type G" evidence="3">
    <location>
        <begin position="27"/>
        <end position="301"/>
    </location>
</feature>
<feature type="region of interest" description="G1 motif" evidence="3">
    <location>
        <begin position="37"/>
        <end position="44"/>
    </location>
</feature>
<feature type="region of interest" description="G3 motif" evidence="3">
    <location>
        <begin position="94"/>
        <end position="97"/>
    </location>
</feature>
<feature type="region of interest" description="G4 motif" evidence="3">
    <location>
        <begin position="175"/>
        <end position="178"/>
    </location>
</feature>
<feature type="region of interest" description="Disordered" evidence="4">
    <location>
        <begin position="352"/>
        <end position="372"/>
    </location>
</feature>
<feature type="compositionally biased region" description="Low complexity" evidence="4">
    <location>
        <begin position="355"/>
        <end position="372"/>
    </location>
</feature>
<feature type="binding site" evidence="1">
    <location>
        <begin position="37"/>
        <end position="44"/>
    </location>
    <ligand>
        <name>GTP</name>
        <dbReference type="ChEBI" id="CHEBI:37565"/>
    </ligand>
</feature>
<feature type="binding site" evidence="1">
    <location>
        <position position="71"/>
    </location>
    <ligand>
        <name>GTP</name>
        <dbReference type="ChEBI" id="CHEBI:37565"/>
    </ligand>
</feature>
<feature type="binding site" evidence="1">
    <location>
        <position position="97"/>
    </location>
    <ligand>
        <name>GTP</name>
        <dbReference type="ChEBI" id="CHEBI:37565"/>
    </ligand>
</feature>
<feature type="binding site" evidence="1">
    <location>
        <begin position="176"/>
        <end position="184"/>
    </location>
    <ligand>
        <name>GTP</name>
        <dbReference type="ChEBI" id="CHEBI:37565"/>
    </ligand>
</feature>
<feature type="binding site" evidence="1">
    <location>
        <position position="234"/>
    </location>
    <ligand>
        <name>GTP</name>
        <dbReference type="ChEBI" id="CHEBI:37565"/>
    </ligand>
</feature>
<feature type="binding site" evidence="1">
    <location>
        <position position="250"/>
    </location>
    <ligand>
        <name>GTP</name>
        <dbReference type="ChEBI" id="CHEBI:37565"/>
    </ligand>
</feature>
<feature type="modified residue" description="Phosphoserine" evidence="11">
    <location>
        <position position="211"/>
    </location>
</feature>
<feature type="modified residue" description="Phosphoserine; by AURKB" evidence="6 10">
    <location>
        <position position="253"/>
    </location>
</feature>
<feature type="modified residue" description="Phosphothreonine" evidence="2">
    <location>
        <position position="256"/>
    </location>
</feature>
<feature type="modified residue" description="Phosphoserine; by AURKB" evidence="6">
    <location>
        <position position="312"/>
    </location>
</feature>
<feature type="modified residue" description="Phosphoserine; by AURKB" evidence="6 10">
    <location>
        <position position="320"/>
    </location>
</feature>
<feature type="splice variant" id="VSP_038269" description="In isoform 2." evidence="7">
    <original>LRPLDVAFLRAVHEKVNIIP</original>
    <variation>SGGGILGAGAFREGWGVSAP</variation>
    <location>
        <begin position="153"/>
        <end position="172"/>
    </location>
</feature>
<feature type="splice variant" id="VSP_038270" description="In isoform 2." evidence="7">
    <location>
        <begin position="173"/>
        <end position="372"/>
    </location>
</feature>
<feature type="sequence variant" id="VAR_051934" description="In dbSNP:rs34518080.">
    <original>G</original>
    <variation>V</variation>
    <location>
        <position position="85"/>
    </location>
</feature>
<feature type="mutagenesis site" description="No effect on phosphorylation." evidence="6">
    <original>S</original>
    <variation>A</variation>
    <location>
        <position position="24"/>
    </location>
</feature>
<feature type="mutagenesis site" description="No effect on phosphorylation." evidence="6">
    <original>S</original>
    <variation>A</variation>
    <location>
        <position position="211"/>
    </location>
</feature>
<feature type="mutagenesis site" description="Great reduction in phosphorylation." evidence="6">
    <original>S</original>
    <variation>A</variation>
    <location>
        <position position="253"/>
    </location>
</feature>
<feature type="mutagenesis site" description="Great reduction in phosphorylation." evidence="6">
    <original>S</original>
    <variation>A</variation>
    <location>
        <position position="312"/>
    </location>
</feature>
<feature type="mutagenesis site" description="No effect on phosphorylation." evidence="6">
    <original>S</original>
    <variation>A</variation>
    <location>
        <position position="317"/>
    </location>
</feature>
<feature type="mutagenesis site" description="Great reduction in phosphorylation." evidence="6">
    <original>S</original>
    <variation>A</variation>
    <location>
        <position position="320"/>
    </location>
</feature>
<feature type="sequence conflict" description="In Ref. 1; AAL40393." evidence="8" ref="1">
    <original>S</original>
    <variation>G</variation>
    <location>
        <position position="65"/>
    </location>
</feature>
<feature type="sequence conflict" description="In Ref. 1; AAL40393." evidence="8" ref="1">
    <original>LRP</original>
    <variation>SR</variation>
    <location>
        <begin position="153"/>
        <end position="155"/>
    </location>
</feature>
<feature type="sequence conflict" description="In Ref. 1; AAL40393." evidence="8" ref="1">
    <original>RP</original>
    <variation>GL</variation>
    <location>
        <begin position="245"/>
        <end position="246"/>
    </location>
</feature>
<feature type="sequence conflict" description="In Ref. 1; AAL40393." evidence="8" ref="1">
    <original>L</original>
    <variation>P</variation>
    <location>
        <position position="329"/>
    </location>
</feature>
<feature type="helix" evidence="12">
    <location>
        <begin position="334"/>
        <end position="360"/>
    </location>
</feature>
<organism>
    <name type="scientific">Homo sapiens</name>
    <name type="common">Human</name>
    <dbReference type="NCBI Taxonomy" id="9606"/>
    <lineage>
        <taxon>Eukaryota</taxon>
        <taxon>Metazoa</taxon>
        <taxon>Chordata</taxon>
        <taxon>Craniata</taxon>
        <taxon>Vertebrata</taxon>
        <taxon>Euteleostomi</taxon>
        <taxon>Mammalia</taxon>
        <taxon>Eutheria</taxon>
        <taxon>Euarchontoglires</taxon>
        <taxon>Primates</taxon>
        <taxon>Haplorrhini</taxon>
        <taxon>Catarrhini</taxon>
        <taxon>Hominidae</taxon>
        <taxon>Homo</taxon>
    </lineage>
</organism>
<accession>Q8WYJ6</accession>
<accession>B4DVE6</accession>
<accession>Q658T1</accession>
<accession>Q8NEZ1</accession>
<accession>Q96EL4</accession>
<accession>Q9H285</accession>
<sequence>MAGGVMDKEYVGFAALPNQLHRKSVKKGFDFTLMVAGESGLGKSTLINSLFLTNLYEDRQVPEASARLTQTLAIERRGVEIEEGGVKVKLTLVDTPGFGDSVDCSDCWLPVVKFIEEQFEQYLRDESGLNRKNIQDSRVHCCLYFISPFGRGLRPLDVAFLRAVHEKVNIIPVIGKADALMPQETQALKQKIRDQLKEEEIHIYQFPECDSDEDEDFKRQDAEMKESIPFAVVGSCEVVRDGGNRPVRGRRYSWGTVEVENPHHCDFLNLRRMLVQTHLQDLKEVTHDLLYEGYRARCLQSLARPGARDRASRSKLSRQSATEIPLPMLPLADTEKLIREKDEELRRMQEMLEKMQAQMQQSQAQGEQSDAL</sequence>
<gene>
    <name evidence="9" type="primary">SEPTIN1</name>
    <name type="synonym">DIFF6</name>
    <name type="synonym">PNUTL3</name>
    <name type="synonym">SEPT1</name>
</gene>
<reference key="1">
    <citation type="submission" date="1998-08" db="EMBL/GenBank/DDBJ databases">
        <title>Isolation and characterization of a novel human gene, HSLARP.</title>
        <authorList>
            <person name="Tu Q."/>
            <person name="Yu L."/>
            <person name="Bi A."/>
            <person name="Zhang H."/>
            <person name="Zhao Y."/>
            <person name="Zhao S."/>
        </authorList>
    </citation>
    <scope>NUCLEOTIDE SEQUENCE [MRNA] (ISOFORM 1)</scope>
</reference>
<reference key="2">
    <citation type="submission" date="2001-05" db="EMBL/GenBank/DDBJ databases">
        <title>Molecular cloning and characterization of human septins which are expressed in liver.</title>
        <authorList>
            <person name="Peng J."/>
            <person name="Yu L."/>
        </authorList>
    </citation>
    <scope>NUCLEOTIDE SEQUENCE [MRNA] (ISOFORM 1)</scope>
</reference>
<reference key="3">
    <citation type="journal article" date="2004" name="Nat. Genet.">
        <title>Complete sequencing and characterization of 21,243 full-length human cDNAs.</title>
        <authorList>
            <person name="Ota T."/>
            <person name="Suzuki Y."/>
            <person name="Nishikawa T."/>
            <person name="Otsuki T."/>
            <person name="Sugiyama T."/>
            <person name="Irie R."/>
            <person name="Wakamatsu A."/>
            <person name="Hayashi K."/>
            <person name="Sato H."/>
            <person name="Nagai K."/>
            <person name="Kimura K."/>
            <person name="Makita H."/>
            <person name="Sekine M."/>
            <person name="Obayashi M."/>
            <person name="Nishi T."/>
            <person name="Shibahara T."/>
            <person name="Tanaka T."/>
            <person name="Ishii S."/>
            <person name="Yamamoto J."/>
            <person name="Saito K."/>
            <person name="Kawai Y."/>
            <person name="Isono Y."/>
            <person name="Nakamura Y."/>
            <person name="Nagahari K."/>
            <person name="Murakami K."/>
            <person name="Yasuda T."/>
            <person name="Iwayanagi T."/>
            <person name="Wagatsuma M."/>
            <person name="Shiratori A."/>
            <person name="Sudo H."/>
            <person name="Hosoiri T."/>
            <person name="Kaku Y."/>
            <person name="Kodaira H."/>
            <person name="Kondo H."/>
            <person name="Sugawara M."/>
            <person name="Takahashi M."/>
            <person name="Kanda K."/>
            <person name="Yokoi T."/>
            <person name="Furuya T."/>
            <person name="Kikkawa E."/>
            <person name="Omura Y."/>
            <person name="Abe K."/>
            <person name="Kamihara K."/>
            <person name="Katsuta N."/>
            <person name="Sato K."/>
            <person name="Tanikawa M."/>
            <person name="Yamazaki M."/>
            <person name="Ninomiya K."/>
            <person name="Ishibashi T."/>
            <person name="Yamashita H."/>
            <person name="Murakawa K."/>
            <person name="Fujimori K."/>
            <person name="Tanai H."/>
            <person name="Kimata M."/>
            <person name="Watanabe M."/>
            <person name="Hiraoka S."/>
            <person name="Chiba Y."/>
            <person name="Ishida S."/>
            <person name="Ono Y."/>
            <person name="Takiguchi S."/>
            <person name="Watanabe S."/>
            <person name="Yosida M."/>
            <person name="Hotuta T."/>
            <person name="Kusano J."/>
            <person name="Kanehori K."/>
            <person name="Takahashi-Fujii A."/>
            <person name="Hara H."/>
            <person name="Tanase T.-O."/>
            <person name="Nomura Y."/>
            <person name="Togiya S."/>
            <person name="Komai F."/>
            <person name="Hara R."/>
            <person name="Takeuchi K."/>
            <person name="Arita M."/>
            <person name="Imose N."/>
            <person name="Musashino K."/>
            <person name="Yuuki H."/>
            <person name="Oshima A."/>
            <person name="Sasaki N."/>
            <person name="Aotsuka S."/>
            <person name="Yoshikawa Y."/>
            <person name="Matsunawa H."/>
            <person name="Ichihara T."/>
            <person name="Shiohata N."/>
            <person name="Sano S."/>
            <person name="Moriya S."/>
            <person name="Momiyama H."/>
            <person name="Satoh N."/>
            <person name="Takami S."/>
            <person name="Terashima Y."/>
            <person name="Suzuki O."/>
            <person name="Nakagawa S."/>
            <person name="Senoh A."/>
            <person name="Mizoguchi H."/>
            <person name="Goto Y."/>
            <person name="Shimizu F."/>
            <person name="Wakebe H."/>
            <person name="Hishigaki H."/>
            <person name="Watanabe T."/>
            <person name="Sugiyama A."/>
            <person name="Takemoto M."/>
            <person name="Kawakami B."/>
            <person name="Yamazaki M."/>
            <person name="Watanabe K."/>
            <person name="Kumagai A."/>
            <person name="Itakura S."/>
            <person name="Fukuzumi Y."/>
            <person name="Fujimori Y."/>
            <person name="Komiyama M."/>
            <person name="Tashiro H."/>
            <person name="Tanigami A."/>
            <person name="Fujiwara T."/>
            <person name="Ono T."/>
            <person name="Yamada K."/>
            <person name="Fujii Y."/>
            <person name="Ozaki K."/>
            <person name="Hirao M."/>
            <person name="Ohmori Y."/>
            <person name="Kawabata A."/>
            <person name="Hikiji T."/>
            <person name="Kobatake N."/>
            <person name="Inagaki H."/>
            <person name="Ikema Y."/>
            <person name="Okamoto S."/>
            <person name="Okitani R."/>
            <person name="Kawakami T."/>
            <person name="Noguchi S."/>
            <person name="Itoh T."/>
            <person name="Shigeta K."/>
            <person name="Senba T."/>
            <person name="Matsumura K."/>
            <person name="Nakajima Y."/>
            <person name="Mizuno T."/>
            <person name="Morinaga M."/>
            <person name="Sasaki M."/>
            <person name="Togashi T."/>
            <person name="Oyama M."/>
            <person name="Hata H."/>
            <person name="Watanabe M."/>
            <person name="Komatsu T."/>
            <person name="Mizushima-Sugano J."/>
            <person name="Satoh T."/>
            <person name="Shirai Y."/>
            <person name="Takahashi Y."/>
            <person name="Nakagawa K."/>
            <person name="Okumura K."/>
            <person name="Nagase T."/>
            <person name="Nomura N."/>
            <person name="Kikuchi H."/>
            <person name="Masuho Y."/>
            <person name="Yamashita R."/>
            <person name="Nakai K."/>
            <person name="Yada T."/>
            <person name="Nakamura Y."/>
            <person name="Ohara O."/>
            <person name="Isogai T."/>
            <person name="Sugano S."/>
        </authorList>
    </citation>
    <scope>NUCLEOTIDE SEQUENCE [LARGE SCALE MRNA] (ISOFORM 2)</scope>
    <source>
        <tissue>Spleen</tissue>
    </source>
</reference>
<reference key="4">
    <citation type="journal article" date="2004" name="Genome Res.">
        <title>The status, quality, and expansion of the NIH full-length cDNA project: the Mammalian Gene Collection (MGC).</title>
        <authorList>
            <consortium name="The MGC Project Team"/>
        </authorList>
    </citation>
    <scope>NUCLEOTIDE SEQUENCE [LARGE SCALE MRNA] (ISOFORM 1)</scope>
    <source>
        <tissue>B-cell</tissue>
    </source>
</reference>
<reference key="5">
    <citation type="journal article" date="2007" name="BMC Genomics">
        <title>The full-ORF clone resource of the German cDNA consortium.</title>
        <authorList>
            <person name="Bechtel S."/>
            <person name="Rosenfelder H."/>
            <person name="Duda A."/>
            <person name="Schmidt C.P."/>
            <person name="Ernst U."/>
            <person name="Wellenreuther R."/>
            <person name="Mehrle A."/>
            <person name="Schuster C."/>
            <person name="Bahr A."/>
            <person name="Bloecker H."/>
            <person name="Heubner D."/>
            <person name="Hoerlein A."/>
            <person name="Michel G."/>
            <person name="Wedler H."/>
            <person name="Koehrer K."/>
            <person name="Ottenwaelder B."/>
            <person name="Poustka A."/>
            <person name="Wiemann S."/>
            <person name="Schupp I."/>
        </authorList>
    </citation>
    <scope>NUCLEOTIDE SEQUENCE [LARGE SCALE MRNA] OF 84-372</scope>
    <source>
        <tissue>Stomach</tissue>
    </source>
</reference>
<reference key="6">
    <citation type="journal article" date="2001" name="Cancer Immun.">
        <title>Humoral immunity to human breast cancer: antigen definition and quantitative analysis of mRNA expression.</title>
        <authorList>
            <person name="Scanlan M.J."/>
            <person name="Gout I."/>
            <person name="Gordon C.M."/>
            <person name="Williamson B."/>
            <person name="Stockert E."/>
            <person name="Gure A.O."/>
            <person name="Jaeger D."/>
            <person name="Chen Y.-T."/>
            <person name="Mackay A."/>
            <person name="O'Hare M.J."/>
            <person name="Old L.J."/>
        </authorList>
    </citation>
    <scope>NUCLEOTIDE SEQUENCE [GENOMIC DNA] OF 98-372</scope>
    <source>
        <tissue>Mammary gland</tissue>
    </source>
</reference>
<reference key="7">
    <citation type="journal article" date="2005" name="Biochem. Biophys. Res. Commun.">
        <title>Septin1, a new interaction partner for human serine/threonine kinase aurora-B.</title>
        <authorList>
            <person name="Qi M."/>
            <person name="Yu W."/>
            <person name="Liu S."/>
            <person name="Jia H."/>
            <person name="Tang L."/>
            <person name="Shen M."/>
            <person name="Yan X."/>
            <person name="Saiyin H."/>
            <person name="Lang Q."/>
            <person name="Wan B."/>
            <person name="Zhao S."/>
            <person name="Yu L."/>
        </authorList>
    </citation>
    <scope>SUBCELLULAR LOCATION</scope>
    <scope>INTERACTION WITH AURKB</scope>
    <scope>PHOSPHORYLATION AT SER-253; SER-312 AND SER-320</scope>
    <scope>MUTAGENESIS OF SER-24; SER-211; SER-253; SER-312; SER-317 AND SER-320</scope>
</reference>
<reference key="8">
    <citation type="journal article" date="2005" name="J. Pathol.">
        <title>Expression profiling the human septin gene family.</title>
        <authorList>
            <person name="Hall P.A."/>
            <person name="Jung K."/>
            <person name="Hillan K.J."/>
            <person name="Russell S.E.H."/>
        </authorList>
    </citation>
    <scope>TISSUE SPECIFICITY</scope>
</reference>
<reference key="9">
    <citation type="journal article" date="2009" name="J. Proteome Res.">
        <title>From midbody protein-protein interaction network construction to novel regulators in cytokinesis.</title>
        <authorList>
            <person name="Chen T.C."/>
            <person name="Lee S.A."/>
            <person name="Hong T.M."/>
            <person name="Shih J.Y."/>
            <person name="Lai J.M."/>
            <person name="Chiou H.Y."/>
            <person name="Yang S.C."/>
            <person name="Chan C.H."/>
            <person name="Kao C.Y."/>
            <person name="Yang P.C."/>
            <person name="Huang C.Y."/>
        </authorList>
    </citation>
    <scope>SUBCELLULAR LOCATION</scope>
</reference>
<reference key="10">
    <citation type="journal article" date="2009" name="Sci. Signal.">
        <title>Quantitative phosphoproteomic analysis of T cell receptor signaling reveals system-wide modulation of protein-protein interactions.</title>
        <authorList>
            <person name="Mayya V."/>
            <person name="Lundgren D.H."/>
            <person name="Hwang S.-I."/>
            <person name="Rezaul K."/>
            <person name="Wu L."/>
            <person name="Eng J.K."/>
            <person name="Rodionov V."/>
            <person name="Han D.K."/>
        </authorList>
    </citation>
    <scope>PHOSPHORYLATION [LARGE SCALE ANALYSIS] AT SER-253 AND SER-320</scope>
    <scope>IDENTIFICATION BY MASS SPECTROMETRY [LARGE SCALE ANALYSIS]</scope>
    <source>
        <tissue>Leukemic T-cell</tissue>
    </source>
</reference>
<reference key="11">
    <citation type="journal article" date="2011" name="BMC Syst. Biol.">
        <title>Initial characterization of the human central proteome.</title>
        <authorList>
            <person name="Burkard T.R."/>
            <person name="Planyavsky M."/>
            <person name="Kaupe I."/>
            <person name="Breitwieser F.P."/>
            <person name="Buerckstuemmer T."/>
            <person name="Bennett K.L."/>
            <person name="Superti-Furga G."/>
            <person name="Colinge J."/>
        </authorList>
    </citation>
    <scope>IDENTIFICATION BY MASS SPECTROMETRY [LARGE SCALE ANALYSIS]</scope>
</reference>
<reference key="12">
    <citation type="journal article" date="2014" name="J. Proteomics">
        <title>An enzyme assisted RP-RPLC approach for in-depth analysis of human liver phosphoproteome.</title>
        <authorList>
            <person name="Bian Y."/>
            <person name="Song C."/>
            <person name="Cheng K."/>
            <person name="Dong M."/>
            <person name="Wang F."/>
            <person name="Huang J."/>
            <person name="Sun D."/>
            <person name="Wang L."/>
            <person name="Ye M."/>
            <person name="Zou H."/>
        </authorList>
    </citation>
    <scope>PHOSPHORYLATION [LARGE SCALE ANALYSIS] AT SER-211</scope>
    <scope>IDENTIFICATION BY MASS SPECTROMETRY [LARGE SCALE ANALYSIS]</scope>
    <source>
        <tissue>Liver</tissue>
    </source>
</reference>
<dbReference type="EMBL" id="AF085235">
    <property type="protein sequence ID" value="AAL40393.1"/>
    <property type="status" value="ALT_INIT"/>
    <property type="molecule type" value="mRNA"/>
</dbReference>
<dbReference type="EMBL" id="AY034176">
    <property type="protein sequence ID" value="AAK61491.1"/>
    <property type="status" value="ALT_INIT"/>
    <property type="molecule type" value="mRNA"/>
</dbReference>
<dbReference type="EMBL" id="AK301045">
    <property type="protein sequence ID" value="BAG62658.1"/>
    <property type="status" value="ALT_INIT"/>
    <property type="molecule type" value="mRNA"/>
</dbReference>
<dbReference type="EMBL" id="BC012161">
    <property type="protein sequence ID" value="AAH12161.1"/>
    <property type="status" value="ALT_INIT"/>
    <property type="molecule type" value="mRNA"/>
</dbReference>
<dbReference type="EMBL" id="AL833004">
    <property type="protein sequence ID" value="CAH56484.1"/>
    <property type="molecule type" value="mRNA"/>
</dbReference>
<dbReference type="EMBL" id="AF308288">
    <property type="protein sequence ID" value="AAG48256.1"/>
    <property type="molecule type" value="Genomic_DNA"/>
</dbReference>
<dbReference type="CCDS" id="CCDS10678.4">
    <molecule id="Q8WYJ6-1"/>
</dbReference>
<dbReference type="RefSeq" id="NP_001352906.1">
    <molecule id="Q8WYJ6-1"/>
    <property type="nucleotide sequence ID" value="NM_001365977.2"/>
</dbReference>
<dbReference type="RefSeq" id="NP_443070.6">
    <molecule id="Q8WYJ6-1"/>
    <property type="nucleotide sequence ID" value="NM_052838.6"/>
</dbReference>
<dbReference type="PDB" id="6WBE">
    <property type="method" value="X-ray"/>
    <property type="resolution" value="2.10 A"/>
    <property type="chains" value="A/B/C/D=333-362"/>
</dbReference>
<dbReference type="PDBsum" id="6WBE"/>
<dbReference type="SMR" id="Q8WYJ6"/>
<dbReference type="BioGRID" id="108075">
    <property type="interactions" value="47"/>
</dbReference>
<dbReference type="FunCoup" id="Q8WYJ6">
    <property type="interactions" value="26"/>
</dbReference>
<dbReference type="IntAct" id="Q8WYJ6">
    <property type="interactions" value="43"/>
</dbReference>
<dbReference type="STRING" id="9606.ENSP00000324511"/>
<dbReference type="iPTMnet" id="Q8WYJ6"/>
<dbReference type="MetOSite" id="Q8WYJ6"/>
<dbReference type="PhosphoSitePlus" id="Q8WYJ6"/>
<dbReference type="BioMuta" id="SEPT1"/>
<dbReference type="DMDM" id="20178107"/>
<dbReference type="jPOST" id="Q8WYJ6"/>
<dbReference type="MassIVE" id="Q8WYJ6"/>
<dbReference type="PaxDb" id="9606-ENSP00000324511"/>
<dbReference type="PeptideAtlas" id="Q8WYJ6"/>
<dbReference type="ProteomicsDB" id="75160">
    <molecule id="Q8WYJ6-1"/>
</dbReference>
<dbReference type="ProteomicsDB" id="75161">
    <molecule id="Q8WYJ6-2"/>
</dbReference>
<dbReference type="Antibodypedia" id="27233">
    <property type="antibodies" value="289 antibodies from 31 providers"/>
</dbReference>
<dbReference type="DNASU" id="1731"/>
<dbReference type="Ensembl" id="ENST00000321367.8">
    <molecule id="Q8WYJ6-1"/>
    <property type="protein sequence ID" value="ENSP00000324511.5"/>
    <property type="gene ID" value="ENSG00000180096.13"/>
</dbReference>
<dbReference type="Ensembl" id="ENST00000652617.2">
    <molecule id="Q8WYJ6-1"/>
    <property type="protein sequence ID" value="ENSP00000498586.2"/>
    <property type="gene ID" value="ENSG00000180096.13"/>
</dbReference>
<dbReference type="GeneID" id="1731"/>
<dbReference type="KEGG" id="hsa:1731"/>
<dbReference type="MANE-Select" id="ENST00000321367.8">
    <property type="protein sequence ID" value="ENSP00000324511.5"/>
    <property type="RefSeq nucleotide sequence ID" value="NM_001365977.2"/>
    <property type="RefSeq protein sequence ID" value="NP_001352906.1"/>
</dbReference>
<dbReference type="AGR" id="HGNC:2879"/>
<dbReference type="CTD" id="1731"/>
<dbReference type="DisGeNET" id="1731"/>
<dbReference type="GeneCards" id="SEPTIN1"/>
<dbReference type="HGNC" id="HGNC:2879">
    <property type="gene designation" value="SEPTIN1"/>
</dbReference>
<dbReference type="HPA" id="ENSG00000180096">
    <property type="expression patterns" value="Tissue enhanced (intestine, lymphoid tissue)"/>
</dbReference>
<dbReference type="MIM" id="612897">
    <property type="type" value="gene"/>
</dbReference>
<dbReference type="neXtProt" id="NX_Q8WYJ6"/>
<dbReference type="OpenTargets" id="ENSG00000180096"/>
<dbReference type="PharmGKB" id="PA24354"/>
<dbReference type="VEuPathDB" id="HostDB:ENSG00000180096"/>
<dbReference type="eggNOG" id="KOG2655">
    <property type="taxonomic scope" value="Eukaryota"/>
</dbReference>
<dbReference type="GeneTree" id="ENSGT00940000161794"/>
<dbReference type="InParanoid" id="Q8WYJ6"/>
<dbReference type="OrthoDB" id="416553at2759"/>
<dbReference type="PAN-GO" id="Q8WYJ6">
    <property type="GO annotations" value="10 GO annotations based on evolutionary models"/>
</dbReference>
<dbReference type="PhylomeDB" id="Q8WYJ6"/>
<dbReference type="TreeFam" id="TF101079"/>
<dbReference type="PathwayCommons" id="Q8WYJ6"/>
<dbReference type="SignaLink" id="Q8WYJ6"/>
<dbReference type="BioGRID-ORCS" id="1731">
    <property type="hits" value="1 hit in 988 CRISPR screens"/>
</dbReference>
<dbReference type="ChiTaRS" id="SEPT1">
    <property type="organism name" value="human"/>
</dbReference>
<dbReference type="GeneWiki" id="SEPT1"/>
<dbReference type="GenomeRNAi" id="1731"/>
<dbReference type="Pharos" id="Q8WYJ6">
    <property type="development level" value="Tdark"/>
</dbReference>
<dbReference type="PRO" id="PR:Q8WYJ6"/>
<dbReference type="Proteomes" id="UP000005640">
    <property type="component" value="Chromosome 16"/>
</dbReference>
<dbReference type="RNAct" id="Q8WYJ6">
    <property type="molecule type" value="protein"/>
</dbReference>
<dbReference type="Bgee" id="ENSG00000180096">
    <property type="expression patterns" value="Expressed in granulocyte and 116 other cell types or tissues"/>
</dbReference>
<dbReference type="ExpressionAtlas" id="Q8WYJ6">
    <property type="expression patterns" value="baseline and differential"/>
</dbReference>
<dbReference type="GO" id="GO:0032153">
    <property type="term" value="C:cell division site"/>
    <property type="evidence" value="ECO:0000318"/>
    <property type="project" value="GO_Central"/>
</dbReference>
<dbReference type="GO" id="GO:0005813">
    <property type="term" value="C:centrosome"/>
    <property type="evidence" value="ECO:0007669"/>
    <property type="project" value="UniProtKB-SubCell"/>
</dbReference>
<dbReference type="GO" id="GO:0072687">
    <property type="term" value="C:meiotic spindle"/>
    <property type="evidence" value="ECO:0007669"/>
    <property type="project" value="Ensembl"/>
</dbReference>
<dbReference type="GO" id="GO:0015630">
    <property type="term" value="C:microtubule cytoskeleton"/>
    <property type="evidence" value="ECO:0000318"/>
    <property type="project" value="GO_Central"/>
</dbReference>
<dbReference type="GO" id="GO:0030496">
    <property type="term" value="C:midbody"/>
    <property type="evidence" value="ECO:0000314"/>
    <property type="project" value="HGNC"/>
</dbReference>
<dbReference type="GO" id="GO:0031105">
    <property type="term" value="C:septin complex"/>
    <property type="evidence" value="ECO:0000318"/>
    <property type="project" value="GO_Central"/>
</dbReference>
<dbReference type="GO" id="GO:0005940">
    <property type="term" value="C:septin ring"/>
    <property type="evidence" value="ECO:0000318"/>
    <property type="project" value="GO_Central"/>
</dbReference>
<dbReference type="GO" id="GO:0008021">
    <property type="term" value="C:synaptic vesicle"/>
    <property type="evidence" value="ECO:0000318"/>
    <property type="project" value="GO_Central"/>
</dbReference>
<dbReference type="GO" id="GO:0005525">
    <property type="term" value="F:GTP binding"/>
    <property type="evidence" value="ECO:0007669"/>
    <property type="project" value="UniProtKB-KW"/>
</dbReference>
<dbReference type="GO" id="GO:0003924">
    <property type="term" value="F:GTPase activity"/>
    <property type="evidence" value="ECO:0000318"/>
    <property type="project" value="GO_Central"/>
</dbReference>
<dbReference type="GO" id="GO:0042802">
    <property type="term" value="F:identical protein binding"/>
    <property type="evidence" value="ECO:0000353"/>
    <property type="project" value="IntAct"/>
</dbReference>
<dbReference type="GO" id="GO:0060090">
    <property type="term" value="F:molecular adaptor activity"/>
    <property type="evidence" value="ECO:0000318"/>
    <property type="project" value="GO_Central"/>
</dbReference>
<dbReference type="GO" id="GO:0061640">
    <property type="term" value="P:cytoskeleton-dependent cytokinesis"/>
    <property type="evidence" value="ECO:0000318"/>
    <property type="project" value="GO_Central"/>
</dbReference>
<dbReference type="GO" id="GO:0051311">
    <property type="term" value="P:meiotic metaphase chromosome alignment"/>
    <property type="evidence" value="ECO:0007669"/>
    <property type="project" value="Ensembl"/>
</dbReference>
<dbReference type="GO" id="GO:0008104">
    <property type="term" value="P:protein localization"/>
    <property type="evidence" value="ECO:0000318"/>
    <property type="project" value="GO_Central"/>
</dbReference>
<dbReference type="GO" id="GO:0017157">
    <property type="term" value="P:regulation of exocytosis"/>
    <property type="evidence" value="ECO:0000318"/>
    <property type="project" value="GO_Central"/>
</dbReference>
<dbReference type="GO" id="GO:0007056">
    <property type="term" value="P:spindle assembly involved in female meiosis"/>
    <property type="evidence" value="ECO:0007669"/>
    <property type="project" value="Ensembl"/>
</dbReference>
<dbReference type="CDD" id="cd01850">
    <property type="entry name" value="CDC_Septin"/>
    <property type="match status" value="1"/>
</dbReference>
<dbReference type="FunFam" id="3.40.50.300:FF:001012">
    <property type="entry name" value="Septin 1"/>
    <property type="match status" value="1"/>
</dbReference>
<dbReference type="Gene3D" id="3.40.50.300">
    <property type="entry name" value="P-loop containing nucleotide triphosphate hydrolases"/>
    <property type="match status" value="1"/>
</dbReference>
<dbReference type="InterPro" id="IPR030379">
    <property type="entry name" value="G_SEPTIN_dom"/>
</dbReference>
<dbReference type="InterPro" id="IPR027417">
    <property type="entry name" value="P-loop_NTPase"/>
</dbReference>
<dbReference type="InterPro" id="IPR016491">
    <property type="entry name" value="Septin"/>
</dbReference>
<dbReference type="PANTHER" id="PTHR18884">
    <property type="entry name" value="SEPTIN"/>
    <property type="match status" value="1"/>
</dbReference>
<dbReference type="Pfam" id="PF00735">
    <property type="entry name" value="Septin"/>
    <property type="match status" value="1"/>
</dbReference>
<dbReference type="PIRSF" id="PIRSF006698">
    <property type="entry name" value="Septin"/>
    <property type="match status" value="1"/>
</dbReference>
<dbReference type="SUPFAM" id="SSF52540">
    <property type="entry name" value="P-loop containing nucleoside triphosphate hydrolases"/>
    <property type="match status" value="1"/>
</dbReference>
<dbReference type="PROSITE" id="PS51719">
    <property type="entry name" value="G_SEPTIN"/>
    <property type="match status" value="1"/>
</dbReference>
<keyword id="KW-0002">3D-structure</keyword>
<keyword id="KW-0025">Alternative splicing</keyword>
<keyword id="KW-0131">Cell cycle</keyword>
<keyword id="KW-0132">Cell division</keyword>
<keyword id="KW-0963">Cytoplasm</keyword>
<keyword id="KW-0206">Cytoskeleton</keyword>
<keyword id="KW-0342">GTP-binding</keyword>
<keyword id="KW-0547">Nucleotide-binding</keyword>
<keyword id="KW-0597">Phosphoprotein</keyword>
<keyword id="KW-1267">Proteomics identification</keyword>
<keyword id="KW-1185">Reference proteome</keyword>
<comment type="function">
    <text evidence="1 8">Filament-forming cytoskeletal GTPase (By similarity). May play a role in cytokinesis (Potential).</text>
</comment>
<comment type="subunit">
    <text evidence="1 6">Septins polymerize into heterooligomeric protein complexes that form filaments, and can associate with cellular membranes, actin filaments and microtubules. GTPase activity is required for filament formation (By similarity). Interacts with AURKB.</text>
</comment>
<comment type="interaction">
    <interactant intactId="EBI-693002">
        <id>Q8WYJ6</id>
    </interactant>
    <interactant intactId="EBI-17286414">
        <id>A2BDD9</id>
        <label>AMOT</label>
    </interactant>
    <organismsDiffer>false</organismsDiffer>
    <experiments>3</experiments>
</comment>
<comment type="interaction">
    <interactant intactId="EBI-693002">
        <id>Q8WYJ6</id>
    </interactant>
    <interactant intactId="EBI-3891843">
        <id>Q4VCS5-2</id>
        <label>AMOT</label>
    </interactant>
    <organismsDiffer>false</organismsDiffer>
    <experiments>3</experiments>
</comment>
<comment type="interaction">
    <interactant intactId="EBI-693002">
        <id>Q8WYJ6</id>
    </interactant>
    <interactant intactId="EBI-624291">
        <id>Q96GD4</id>
        <label>AURKB</label>
    </interactant>
    <organismsDiffer>false</organismsDiffer>
    <experiments>6</experiments>
</comment>
<comment type="interaction">
    <interactant intactId="EBI-693002">
        <id>Q8WYJ6</id>
    </interactant>
    <interactant intactId="EBI-742054">
        <id>Q96D03</id>
        <label>DDIT4L</label>
    </interactant>
    <organismsDiffer>false</organismsDiffer>
    <experiments>3</experiments>
</comment>
<comment type="interaction">
    <interactant intactId="EBI-693002">
        <id>Q8WYJ6</id>
    </interactant>
    <interactant intactId="EBI-11514233">
        <id>P59910</id>
        <label>DNAJB13</label>
    </interactant>
    <organismsDiffer>false</organismsDiffer>
    <experiments>3</experiments>
</comment>
<comment type="interaction">
    <interactant intactId="EBI-693002">
        <id>Q8WYJ6</id>
    </interactant>
    <interactant intactId="EBI-739467">
        <id>Q9H8Y8</id>
        <label>GORASP2</label>
    </interactant>
    <organismsDiffer>false</organismsDiffer>
    <experiments>3</experiments>
</comment>
<comment type="interaction">
    <interactant intactId="EBI-693002">
        <id>Q8WYJ6</id>
    </interactant>
    <interactant intactId="EBI-10261098">
        <id>Q86YR5-3</id>
        <label>GPSM1</label>
    </interactant>
    <organismsDiffer>false</organismsDiffer>
    <experiments>3</experiments>
</comment>
<comment type="interaction">
    <interactant intactId="EBI-693002">
        <id>Q8WYJ6</id>
    </interactant>
    <interactant intactId="EBI-7116203">
        <id>O75031</id>
        <label>HSF2BP</label>
    </interactant>
    <organismsDiffer>false</organismsDiffer>
    <experiments>3</experiments>
</comment>
<comment type="interaction">
    <interactant intactId="EBI-693002">
        <id>Q8WYJ6</id>
    </interactant>
    <interactant intactId="EBI-739832">
        <id>Q8TBB1</id>
        <label>LNX1</label>
    </interactant>
    <organismsDiffer>false</organismsDiffer>
    <experiments>3</experiments>
</comment>
<comment type="interaction">
    <interactant intactId="EBI-693002">
        <id>Q8WYJ6</id>
    </interactant>
    <interactant intactId="EBI-10172526">
        <id>Q9UJV3-2</id>
        <label>MID2</label>
    </interactant>
    <organismsDiffer>false</organismsDiffer>
    <experiments>3</experiments>
</comment>
<comment type="interaction">
    <interactant intactId="EBI-693002">
        <id>Q8WYJ6</id>
    </interactant>
    <interactant intactId="EBI-358272">
        <id>P52815</id>
        <label>MRPL12</label>
    </interactant>
    <organismsDiffer>false</organismsDiffer>
    <experiments>3</experiments>
</comment>
<comment type="interaction">
    <interactant intactId="EBI-693002">
        <id>Q8WYJ6</id>
    </interactant>
    <interactant intactId="EBI-740897">
        <id>Q9GZT8</id>
        <label>NIF3L1</label>
    </interactant>
    <organismsDiffer>false</organismsDiffer>
    <experiments>3</experiments>
</comment>
<comment type="interaction">
    <interactant intactId="EBI-693002">
        <id>Q8WYJ6</id>
    </interactant>
    <interactant intactId="EBI-79165">
        <id>Q9NRD5</id>
        <label>PICK1</label>
    </interactant>
    <organismsDiffer>false</organismsDiffer>
    <experiments>3</experiments>
</comment>
<comment type="interaction">
    <interactant intactId="EBI-693002">
        <id>Q8WYJ6</id>
    </interactant>
    <interactant intactId="EBI-357318">
        <id>Q9NWS0</id>
        <label>PIH1D1</label>
    </interactant>
    <organismsDiffer>false</organismsDiffer>
    <experiments>3</experiments>
</comment>
<comment type="interaction">
    <interactant intactId="EBI-693002">
        <id>Q8WYJ6</id>
    </interactant>
    <interactant intactId="EBI-727004">
        <id>O00560</id>
        <label>SDCBP</label>
    </interactant>
    <organismsDiffer>false</organismsDiffer>
    <experiments>3</experiments>
</comment>
<comment type="interaction">
    <interactant intactId="EBI-693002">
        <id>Q8WYJ6</id>
    </interactant>
    <interactant intactId="EBI-16437910">
        <id>A0A0S2Z5W9</id>
        <label>SEPT9</label>
    </interactant>
    <organismsDiffer>false</organismsDiffer>
    <experiments>3</experiments>
</comment>
<comment type="interaction">
    <interactant intactId="EBI-693002">
        <id>Q8WYJ6</id>
    </interactant>
    <interactant intactId="EBI-693002">
        <id>Q8WYJ6</id>
        <label>SEPTIN1</label>
    </interactant>
    <organismsDiffer>false</organismsDiffer>
    <experiments>5</experiments>
</comment>
<comment type="interaction">
    <interactant intactId="EBI-693002">
        <id>Q8WYJ6</id>
    </interactant>
    <interactant intactId="EBI-957999">
        <id>Q9NVA2</id>
        <label>SEPTIN11</label>
    </interactant>
    <organismsDiffer>false</organismsDiffer>
    <experiments>5</experiments>
</comment>
<comment type="interaction">
    <interactant intactId="EBI-693002">
        <id>Q8WYJ6</id>
    </interactant>
    <interactant intactId="EBI-2585067">
        <id>Q8IYM1</id>
        <label>SEPTIN12</label>
    </interactant>
    <organismsDiffer>false</organismsDiffer>
    <experiments>12</experiments>
</comment>
<comment type="interaction">
    <interactant intactId="EBI-693002">
        <id>Q8WYJ6</id>
    </interactant>
    <interactant intactId="EBI-727037">
        <id>Q9UH03</id>
        <label>SEPTIN3</label>
    </interactant>
    <organismsDiffer>false</organismsDiffer>
    <experiments>5</experiments>
</comment>
<comment type="interaction">
    <interactant intactId="EBI-693002">
        <id>Q8WYJ6</id>
    </interactant>
    <interactant intactId="EBI-373345">
        <id>Q99719</id>
        <label>SEPTIN5</label>
    </interactant>
    <organismsDiffer>false</organismsDiffer>
    <experiments>15</experiments>
</comment>
<comment type="interaction">
    <interactant intactId="EBI-693002">
        <id>Q8WYJ6</id>
    </interactant>
    <interactant intactId="EBI-745901">
        <id>Q14141</id>
        <label>SEPTIN6</label>
    </interactant>
    <organismsDiffer>false</organismsDiffer>
    <experiments>11</experiments>
</comment>
<comment type="interaction">
    <interactant intactId="EBI-693002">
        <id>Q8WYJ6</id>
    </interactant>
    <interactant intactId="EBI-742397">
        <id>Q8IYF3</id>
        <label>TEX11</label>
    </interactant>
    <organismsDiffer>false</organismsDiffer>
    <experiments>3</experiments>
</comment>
<comment type="interaction">
    <interactant intactId="EBI-693002">
        <id>Q8WYJ6</id>
    </interactant>
    <interactant intactId="EBI-10180829">
        <id>Q7KZS0</id>
        <label>UBE2I</label>
    </interactant>
    <organismsDiffer>false</organismsDiffer>
    <experiments>3</experiments>
</comment>
<comment type="subcellular location">
    <subcellularLocation>
        <location evidence="1">Cytoplasm</location>
    </subcellularLocation>
    <subcellularLocation>
        <location evidence="1">Cytoplasm</location>
        <location evidence="1">Cytoskeleton</location>
    </subcellularLocation>
    <subcellularLocation>
        <location>Cytoplasm</location>
        <location>Cytoskeleton</location>
        <location>Microtubule organizing center</location>
        <location>Centrosome</location>
    </subcellularLocation>
    <subcellularLocation>
        <location>Midbody</location>
    </subcellularLocation>
    <text>Remains at the centrosomes and the nearby microtubules throughout mitosis. Localizes to the midbody during cytokinesis.</text>
</comment>
<comment type="alternative products">
    <event type="alternative splicing"/>
    <isoform>
        <id>Q8WYJ6-1</id>
        <name>1</name>
        <sequence type="displayed"/>
    </isoform>
    <isoform>
        <id>Q8WYJ6-2</id>
        <name>2</name>
        <sequence type="described" ref="VSP_038269 VSP_038270"/>
    </isoform>
</comment>
<comment type="tissue specificity">
    <text evidence="5">Expressed at high levels in lymphoid and hematopoietic tissues.</text>
</comment>
<comment type="similarity">
    <text evidence="3">Belongs to the TRAFAC class TrmE-Era-EngA-EngB-Septin-like GTPase superfamily. Septin GTPase family.</text>
</comment>
<comment type="sequence caution" evidence="8">
    <conflict type="erroneous initiation">
        <sequence resource="EMBL-CDS" id="AAH12161"/>
    </conflict>
    <text>Truncated N-terminus.</text>
</comment>
<comment type="sequence caution" evidence="8">
    <conflict type="erroneous initiation">
        <sequence resource="EMBL-CDS" id="AAK61491"/>
    </conflict>
    <text>Truncated N-terminus.</text>
</comment>
<comment type="sequence caution" evidence="8">
    <conflict type="erroneous initiation">
        <sequence resource="EMBL-CDS" id="AAL40393"/>
    </conflict>
    <text>Truncated N-terminus.</text>
</comment>
<comment type="sequence caution" evidence="8">
    <conflict type="erroneous initiation">
        <sequence resource="EMBL-CDS" id="BAG62658"/>
    </conflict>
    <text>Truncated N-terminus.</text>
</comment>
<protein>
    <recommendedName>
        <fullName evidence="8">Septin-1</fullName>
    </recommendedName>
    <alternativeName>
        <fullName>LARP</fullName>
    </alternativeName>
    <alternativeName>
        <fullName>Peanut-like protein 3</fullName>
    </alternativeName>
    <alternativeName>
        <fullName>Serologically defined breast cancer antigen NY-BR-24</fullName>
    </alternativeName>
</protein>